<sequence>MAKHDVTVMTLLLVVCALHVFDAQGTDVKLNDGFLRSGIMNIPFQRRVSPKYGHNFVGKRSGFQSPVSPSDYFIPDELNDEDESPNMDTYALFRELLGEYPSSELSDDDVIRPYPVVPWAWDRFENKRFSKENEKRGSPGFSHSFVGKRMDLSALEKELIAKLKAADLLSPLETEAPGKRRLPSYGHSFLGKRMPVDVFPRAIPSYSHNFVGKRSGNGENYFDDLDTFGDISQRADLGFTHSFVGKRGNTDFSRNPLARLSQVQNRAIPNFVHKFVGKRSVHNIVKRSSPFYGHNFVGKRDFEDASEGLDEEEGDIDGYSDDLDVKRVPGYSHSFVGKRIPGYSHSFVGKRTPGYSHSFVGKRVPGYSHSFVGKRVPGYSHSFVGKRVPGYSHSFVGKRVPGYSHSFVGKRVPGYSHSFVGKRTPGYSHSFVGKRAPGYSHSFVGKRTPGYSHSFVGKRAPGYSHSFVGKRAPGYSHSFVGKRAPGYSHSFVGKRVPGYSHSFVGKRAPGYSHSFVGKRVPGYSHSFVGKRAPGYSHSFVGKRELGEDEINFLKEVDAADISRQLAEEDEKEAMVSVDDKETLSNEEDASEDDFEKRELNFQHAFVGKKDEEGDMGVEMEEEMESEKGQPGYGNAFLGKRQPSYGHSFVGKRQPGYSHSFVGKRVPSFGHSFVGKRQPSYTHAFVGKRDPGFNHAFVGKRQPSFGHSFVGKRQPSFTHAFVGKRQPSFGHSFVGKRSGAEDIDNTFTDNFVVKGSDPLEDVLDFYSDSQLIGQPAAANEEELQQEAAEESENQTGTKQLDDKSNVPASSLGDDLPSPVSLSKQEDAEDSHIMATSST</sequence>
<name>ENPP_APLCA</name>
<organism>
    <name type="scientific">Aplysia californica</name>
    <name type="common">California sea hare</name>
    <dbReference type="NCBI Taxonomy" id="6500"/>
    <lineage>
        <taxon>Eukaryota</taxon>
        <taxon>Metazoa</taxon>
        <taxon>Spiralia</taxon>
        <taxon>Lophotrochozoa</taxon>
        <taxon>Mollusca</taxon>
        <taxon>Gastropoda</taxon>
        <taxon>Heterobranchia</taxon>
        <taxon>Euthyneura</taxon>
        <taxon>Tectipleura</taxon>
        <taxon>Aplysiida</taxon>
        <taxon>Aplysioidea</taxon>
        <taxon>Aplysiidae</taxon>
        <taxon>Aplysia</taxon>
    </lineage>
</organism>
<accession>Q95P23</accession>
<dbReference type="EMBL" id="AY040526">
    <property type="protein sequence ID" value="AAL17716.1"/>
    <property type="molecule type" value="mRNA"/>
</dbReference>
<dbReference type="RefSeq" id="NP_001191483.1">
    <property type="nucleotide sequence ID" value="NM_001204554.1"/>
</dbReference>
<dbReference type="SMR" id="Q95P23"/>
<dbReference type="EnsemblMetazoa" id="NM_001204554.1">
    <property type="protein sequence ID" value="NP_001191483.1"/>
    <property type="gene ID" value="GeneID_100533242"/>
</dbReference>
<dbReference type="GeneID" id="100533242"/>
<dbReference type="CTD" id="100533242"/>
<dbReference type="OrthoDB" id="6115092at2759"/>
<dbReference type="Proteomes" id="UP000694888">
    <property type="component" value="Unplaced"/>
</dbReference>
<dbReference type="GO" id="GO:0005576">
    <property type="term" value="C:extracellular region"/>
    <property type="evidence" value="ECO:0007669"/>
    <property type="project" value="UniProtKB-SubCell"/>
</dbReference>
<dbReference type="GO" id="GO:0007218">
    <property type="term" value="P:neuropeptide signaling pathway"/>
    <property type="evidence" value="ECO:0007669"/>
    <property type="project" value="UniProtKB-KW"/>
</dbReference>
<keyword id="KW-0027">Amidation</keyword>
<keyword id="KW-0165">Cleavage on pair of basic residues</keyword>
<keyword id="KW-0527">Neuropeptide</keyword>
<keyword id="KW-0873">Pyrrolidone carboxylic acid</keyword>
<keyword id="KW-0964">Secreted</keyword>
<keyword id="KW-0732">Signal</keyword>
<comment type="function">
    <text evidence="3">Reduce interneurons B4/5 activity. May play a regulatory role in nonfeeding behaviors.</text>
</comment>
<comment type="subcellular location">
    <subcellularLocation>
        <location>Secreted</location>
    </subcellularLocation>
</comment>
<comment type="tissue specificity">
    <text evidence="3">High expression in gut and CNS.</text>
</comment>
<comment type="mass spectrometry">
    <molecule>ENa</molecule>
</comment>
<comment type="mass spectrometry">
    <molecule>ENb</molecule>
</comment>
<comment type="mass spectrometry">
    <molecule>ENc</molecule>
</comment>
<comment type="mass spectrometry">
    <molecule>ENd</molecule>
</comment>
<comment type="mass spectrometry">
    <molecule>ENe</molecule>
</comment>
<comment type="mass spectrometry">
    <molecule>ENf</molecule>
</comment>
<comment type="mass spectrometry">
    <molecule>ENg</molecule>
</comment>
<comment type="mass spectrometry">
    <molecule>ENh</molecule>
    <text>ENh.</text>
</comment>
<comment type="mass spectrometry">
    <molecule>ENi</molecule>
</comment>
<comment type="mass spectrometry">
    <molecule>ENj</molecule>
</comment>
<comment type="mass spectrometry">
    <molecule>ENk</molecule>
</comment>
<comment type="mass spectrometry">
    <molecule>ENl</molecule>
</comment>
<comment type="mass spectrometry">
    <molecule>ENl</molecule>
    <text>ENl'.</text>
</comment>
<comment type="mass spectrometry">
    <molecule>ENm</molecule>
</comment>
<comment type="mass spectrometry">
    <molecule>ENo</molecule>
</comment>
<comment type="mass spectrometry">
    <molecule>ENp</molecule>
</comment>
<comment type="mass spectrometry">
    <molecule>ENq</molecule>
</comment>
<comment type="mass spectrometry">
    <molecule>ENr</molecule>
</comment>
<comment type="mass spectrometry">
    <molecule>ENs</molecule>
</comment>
<comment type="mass spectrometry">
    <molecule>ENt</molecule>
</comment>
<feature type="signal peptide" evidence="1">
    <location>
        <begin position="1"/>
        <end position="25"/>
    </location>
</feature>
<feature type="propeptide" id="PRO_0000343362" evidence="1">
    <location>
        <begin position="26"/>
        <end position="47"/>
    </location>
</feature>
<feature type="peptide" id="PRO_0000343363" description="ENa">
    <location>
        <begin position="48"/>
        <end position="57"/>
    </location>
</feature>
<feature type="propeptide" id="PRO_0000343364">
    <location>
        <begin position="61"/>
        <end position="134"/>
    </location>
</feature>
<feature type="peptide" id="PRO_0000343365" description="ENb">
    <location>
        <begin position="137"/>
        <end position="146"/>
    </location>
</feature>
<feature type="propeptide" id="PRO_0000343366">
    <location>
        <begin position="150"/>
        <end position="178"/>
    </location>
</feature>
<feature type="peptide" id="PRO_0000343367" description="ENc">
    <location>
        <begin position="181"/>
        <end position="190"/>
    </location>
</feature>
<feature type="propeptide" id="PRO_0000343368">
    <location>
        <begin position="194"/>
        <end position="201"/>
    </location>
</feature>
<feature type="peptide" id="PRO_0000343369" description="ENd">
    <location>
        <begin position="202"/>
        <end position="211"/>
    </location>
</feature>
<feature type="propeptide" id="PRO_0000343370">
    <location>
        <begin position="215"/>
        <end position="234"/>
    </location>
</feature>
<feature type="peptide" id="PRO_0000343371" description="ENe">
    <location>
        <begin position="235"/>
        <end position="244"/>
    </location>
</feature>
<feature type="propeptide" id="PRO_0000343372">
    <location>
        <begin position="248"/>
        <end position="266"/>
    </location>
</feature>
<feature type="peptide" id="PRO_0000343373" description="ENf">
    <location>
        <begin position="267"/>
        <end position="276"/>
    </location>
</feature>
<feature type="propeptide" id="PRO_0000343374">
    <location>
        <begin position="280"/>
        <end position="285"/>
    </location>
</feature>
<feature type="peptide" id="PRO_0000343375" description="ENg">
    <location>
        <begin position="288"/>
        <end position="297"/>
    </location>
</feature>
<feature type="propeptide" id="PRO_0000343376">
    <location>
        <begin position="301"/>
        <end position="325"/>
    </location>
</feature>
<feature type="peptide" id="PRO_0000343377" description="ENh">
    <location>
        <begin position="328"/>
        <end position="336"/>
    </location>
</feature>
<feature type="peptide" id="PRO_0000343378" description="ENi">
    <location>
        <begin position="340"/>
        <end position="348"/>
    </location>
</feature>
<feature type="peptide" id="PRO_0000343379" description="ENj">
    <location>
        <begin position="352"/>
        <end position="360"/>
    </location>
</feature>
<feature type="peptide" id="PRO_0000343380" description="ENh">
    <location>
        <begin position="364"/>
        <end position="372"/>
    </location>
</feature>
<feature type="peptide" id="PRO_0000343381" description="ENh">
    <location>
        <begin position="376"/>
        <end position="384"/>
    </location>
</feature>
<feature type="peptide" id="PRO_0000343382" description="ENh">
    <location>
        <begin position="388"/>
        <end position="396"/>
    </location>
</feature>
<feature type="peptide" id="PRO_0000343383" description="ENh">
    <location>
        <begin position="400"/>
        <end position="408"/>
    </location>
</feature>
<feature type="peptide" id="PRO_0000343384" description="ENh">
    <location>
        <begin position="412"/>
        <end position="420"/>
    </location>
</feature>
<feature type="peptide" id="PRO_0000343385" description="ENj">
    <location>
        <begin position="424"/>
        <end position="432"/>
    </location>
</feature>
<feature type="peptide" id="PRO_0000343386" description="ENk">
    <location>
        <begin position="436"/>
        <end position="444"/>
    </location>
</feature>
<feature type="peptide" id="PRO_0000343387" description="ENj">
    <location>
        <begin position="448"/>
        <end position="456"/>
    </location>
</feature>
<feature type="peptide" id="PRO_0000343388" description="ENk">
    <location>
        <begin position="460"/>
        <end position="468"/>
    </location>
</feature>
<feature type="peptide" id="PRO_0000343389" description="ENk">
    <location>
        <begin position="472"/>
        <end position="480"/>
    </location>
</feature>
<feature type="peptide" id="PRO_0000343390" description="ENk">
    <location>
        <begin position="484"/>
        <end position="492"/>
    </location>
</feature>
<feature type="peptide" id="PRO_0000343391" description="ENh">
    <location>
        <begin position="496"/>
        <end position="504"/>
    </location>
</feature>
<feature type="peptide" id="PRO_0000343392" description="ENk">
    <location>
        <begin position="508"/>
        <end position="516"/>
    </location>
</feature>
<feature type="peptide" id="PRO_0000343393" description="ENh">
    <location>
        <begin position="520"/>
        <end position="528"/>
    </location>
</feature>
<feature type="peptide" id="PRO_0000343394" description="ENk">
    <location>
        <begin position="532"/>
        <end position="540"/>
    </location>
</feature>
<feature type="propeptide" id="PRO_0000343395">
    <location>
        <begin position="544"/>
        <end position="595"/>
    </location>
</feature>
<feature type="peptide" id="PRO_0000343396" description="ENl">
    <location>
        <begin position="598"/>
        <end position="606"/>
    </location>
</feature>
<feature type="propeptide" id="PRO_0000343397">
    <location>
        <begin position="610"/>
        <end position="627"/>
    </location>
</feature>
<feature type="peptide" id="PRO_0000343398" description="ENm">
    <location>
        <begin position="628"/>
        <end position="637"/>
    </location>
</feature>
<feature type="peptide" id="PRO_0000343399" description="ENn">
    <location>
        <begin position="641"/>
        <end position="649"/>
    </location>
</feature>
<feature type="peptide" id="PRO_0000343400" description="ENo">
    <location>
        <begin position="653"/>
        <end position="661"/>
    </location>
</feature>
<feature type="peptide" id="PRO_0000343401" description="ENp">
    <location>
        <begin position="665"/>
        <end position="673"/>
    </location>
</feature>
<feature type="peptide" id="PRO_0000343402" description="ENq">
    <location>
        <begin position="677"/>
        <end position="685"/>
    </location>
</feature>
<feature type="peptide" id="PRO_0000343403" description="ENr">
    <location>
        <begin position="689"/>
        <end position="697"/>
    </location>
</feature>
<feature type="peptide" id="PRO_0000343404" description="ENs">
    <location>
        <begin position="701"/>
        <end position="709"/>
    </location>
</feature>
<feature type="peptide" id="PRO_0000343405" description="ENt">
    <location>
        <begin position="713"/>
        <end position="721"/>
    </location>
</feature>
<feature type="peptide" id="PRO_0000439542" description="ENs">
    <location>
        <begin position="725"/>
        <end position="733"/>
    </location>
</feature>
<feature type="propeptide" id="PRO_0000343406">
    <location>
        <begin position="734"/>
        <end position="837"/>
    </location>
</feature>
<feature type="region of interest" description="Disordered" evidence="2">
    <location>
        <begin position="567"/>
        <end position="594"/>
    </location>
</feature>
<feature type="region of interest" description="Disordered" evidence="2">
    <location>
        <begin position="772"/>
        <end position="837"/>
    </location>
</feature>
<feature type="compositionally biased region" description="Acidic residues" evidence="2">
    <location>
        <begin position="584"/>
        <end position="593"/>
    </location>
</feature>
<feature type="compositionally biased region" description="Acidic residues" evidence="2">
    <location>
        <begin position="778"/>
        <end position="791"/>
    </location>
</feature>
<feature type="modified residue" description="Valine amide" evidence="3">
    <location>
        <position position="57"/>
    </location>
</feature>
<feature type="modified residue" description="Valine amide" evidence="3">
    <location>
        <position position="146"/>
    </location>
</feature>
<feature type="modified residue" description="Leucine amide" evidence="3">
    <location>
        <position position="190"/>
    </location>
</feature>
<feature type="modified residue" description="Valine amide" evidence="3">
    <location>
        <position position="211"/>
    </location>
</feature>
<feature type="modified residue" description="Valine amide" evidence="3">
    <location>
        <position position="244"/>
    </location>
</feature>
<feature type="modified residue" description="Valine amide" evidence="3">
    <location>
        <position position="276"/>
    </location>
</feature>
<feature type="modified residue" description="Valine amide" evidence="3">
    <location>
        <position position="297"/>
    </location>
</feature>
<feature type="modified residue" description="Valine amide" evidence="3">
    <location>
        <position position="336"/>
    </location>
</feature>
<feature type="modified residue" description="Valine amide" evidence="3">
    <location>
        <position position="348"/>
    </location>
</feature>
<feature type="modified residue" description="Valine amide" evidence="3">
    <location>
        <position position="360"/>
    </location>
</feature>
<feature type="modified residue" description="Valine amide" evidence="3">
    <location>
        <position position="372"/>
    </location>
</feature>
<feature type="modified residue" description="Valine amide" evidence="3">
    <location>
        <position position="384"/>
    </location>
</feature>
<feature type="modified residue" description="Valine amide" evidence="3">
    <location>
        <position position="396"/>
    </location>
</feature>
<feature type="modified residue" description="Valine amide" evidence="3">
    <location>
        <position position="408"/>
    </location>
</feature>
<feature type="modified residue" description="Valine amide" evidence="3">
    <location>
        <position position="420"/>
    </location>
</feature>
<feature type="modified residue" description="Valine amide" evidence="3">
    <location>
        <position position="432"/>
    </location>
</feature>
<feature type="modified residue" description="Valine amide" evidence="3">
    <location>
        <position position="444"/>
    </location>
</feature>
<feature type="modified residue" description="Valine amide" evidence="3">
    <location>
        <position position="456"/>
    </location>
</feature>
<feature type="modified residue" description="Valine amide" evidence="3">
    <location>
        <position position="468"/>
    </location>
</feature>
<feature type="modified residue" description="Valine amide" evidence="3">
    <location>
        <position position="480"/>
    </location>
</feature>
<feature type="modified residue" description="Valine amide" evidence="3">
    <location>
        <position position="492"/>
    </location>
</feature>
<feature type="modified residue" description="Valine amide" evidence="3">
    <location>
        <position position="504"/>
    </location>
</feature>
<feature type="modified residue" description="Valine amide" evidence="3">
    <location>
        <position position="516"/>
    </location>
</feature>
<feature type="modified residue" description="Valine amide" evidence="3">
    <location>
        <position position="528"/>
    </location>
</feature>
<feature type="modified residue" description="Valine amide" evidence="3">
    <location>
        <position position="540"/>
    </location>
</feature>
<feature type="modified residue" description="Pyrrolidone carboxylic acid (Glu); in form ENl'" evidence="3">
    <location>
        <position position="598"/>
    </location>
</feature>
<feature type="modified residue" description="Valine amide" evidence="3">
    <location>
        <position position="606"/>
    </location>
</feature>
<feature type="modified residue" description="Leucine amide" evidence="3">
    <location>
        <position position="637"/>
    </location>
</feature>
<feature type="modified residue" description="Pyrrolidone carboxylic acid" evidence="3">
    <location>
        <position position="641"/>
    </location>
</feature>
<feature type="modified residue" description="Valine amide" evidence="3">
    <location>
        <position position="649"/>
    </location>
</feature>
<feature type="modified residue" description="Pyrrolidone carboxylic acid" evidence="3">
    <location>
        <position position="653"/>
    </location>
</feature>
<feature type="modified residue" description="Valine amide" evidence="3">
    <location>
        <position position="661"/>
    </location>
</feature>
<feature type="modified residue" description="Valine amide" evidence="3">
    <location>
        <position position="673"/>
    </location>
</feature>
<feature type="modified residue" description="Pyrrolidone carboxylic acid" evidence="3">
    <location>
        <position position="677"/>
    </location>
</feature>
<feature type="modified residue" description="Valine amide" evidence="3">
    <location>
        <position position="685"/>
    </location>
</feature>
<feature type="modified residue" description="Valine amide" evidence="3">
    <location>
        <position position="697"/>
    </location>
</feature>
<feature type="modified residue" description="Pyrrolidone carboxylic acid" evidence="3">
    <location>
        <position position="701"/>
    </location>
</feature>
<feature type="modified residue" description="Valine amide" evidence="3">
    <location>
        <position position="709"/>
    </location>
</feature>
<feature type="modified residue" description="Pyrrolidone carboxylic acid" evidence="3">
    <location>
        <position position="713"/>
    </location>
</feature>
<feature type="modified residue" description="Valine amide" evidence="3">
    <location>
        <position position="721"/>
    </location>
</feature>
<feature type="modified residue" description="Pyrrolidone carboxylic acid" evidence="3">
    <location>
        <position position="725"/>
    </location>
</feature>
<feature type="modified residue" description="Valine amide" evidence="3">
    <location>
        <position position="733"/>
    </location>
</feature>
<proteinExistence type="evidence at protein level"/>
<reference key="1">
    <citation type="journal article" date="2001" name="J. Neurosci.">
        <title>The enterins: a novel family of neuropeptides isolated from the enteric nervous system and CNS of Aplysia.</title>
        <authorList>
            <person name="Furukawa Y."/>
            <person name="Nakamaru K."/>
            <person name="Wakayama H."/>
            <person name="Fujisawa Y."/>
            <person name="Minakata H."/>
            <person name="Ohta S."/>
            <person name="Morishita F."/>
            <person name="Matsushima O."/>
            <person name="Li L."/>
            <person name="Romanova E."/>
            <person name="Sweedler J.V."/>
            <person name="Park J.H."/>
            <person name="Romero A."/>
            <person name="Cropper E.C."/>
            <person name="Dembrow N.C."/>
            <person name="Jing J."/>
            <person name="Weiss K.R."/>
            <person name="Vilim F.S."/>
        </authorList>
    </citation>
    <scope>NUCLEOTIDE SEQUENCE [MRNA]</scope>
    <scope>FUNCTION</scope>
    <scope>TISSUE SPECIFICITY</scope>
    <scope>PROTEOLYTIC PROCESSING</scope>
    <scope>PYROGLUTAMATE FORMATION AT GLU-598; GLN-641; GLN-653; GLN-677; GLN-701; GLN-713 AND GLN-725</scope>
    <scope>AMIDATION AT VAL-57; VAL-146; LEU-190; VAL-211; VAL-244; VAL-276; VAL-297; VAL-336; VAL-348; VAL-360; VAL-372; VAL-384; VAL-396; VAL-408; VAL-420; VAL-432; VAL-444; VAL-456; VAL-468; VAL-480; VAL-492; VAL-504; VAL-516; VAL-528; VAL-540; VAL-606; LEU-637; VAL-649; VAL-661; VAL-673; VAL-685; VAL-697; VAL-709; VAL-721 AND VAL-733</scope>
    <scope>MASS SPECTROMETRY</scope>
    <source>
        <tissue>CNS</tissue>
        <tissue>Gut</tissue>
    </source>
</reference>
<evidence type="ECO:0000255" key="1"/>
<evidence type="ECO:0000256" key="2">
    <source>
        <dbReference type="SAM" id="MobiDB-lite"/>
    </source>
</evidence>
<evidence type="ECO:0000269" key="3">
    <source>
    </source>
</evidence>
<gene>
    <name type="primary">ENPP</name>
</gene>
<protein>
    <recommendedName>
        <fullName>Enterin neuropeptides</fullName>
    </recommendedName>
    <component>
        <recommendedName>
            <fullName>ENa</fullName>
        </recommendedName>
    </component>
    <component>
        <recommendedName>
            <fullName>ENb</fullName>
        </recommendedName>
    </component>
    <component>
        <recommendedName>
            <fullName>ENc</fullName>
        </recommendedName>
    </component>
    <component>
        <recommendedName>
            <fullName>ENd</fullName>
        </recommendedName>
    </component>
    <component>
        <recommendedName>
            <fullName>ENe</fullName>
        </recommendedName>
    </component>
    <component>
        <recommendedName>
            <fullName>ENf</fullName>
        </recommendedName>
    </component>
    <component>
        <recommendedName>
            <fullName>ENg</fullName>
        </recommendedName>
    </component>
    <component>
        <recommendedName>
            <fullName>ENh</fullName>
        </recommendedName>
    </component>
    <component>
        <recommendedName>
            <fullName>ENi</fullName>
        </recommendedName>
    </component>
    <component>
        <recommendedName>
            <fullName>ENj</fullName>
        </recommendedName>
    </component>
    <component>
        <recommendedName>
            <fullName>ENk</fullName>
        </recommendedName>
    </component>
    <component>
        <recommendedName>
            <fullName>ENl</fullName>
        </recommendedName>
    </component>
    <component>
        <recommendedName>
            <fullName>ENm</fullName>
        </recommendedName>
    </component>
    <component>
        <recommendedName>
            <fullName>ENn</fullName>
        </recommendedName>
    </component>
    <component>
        <recommendedName>
            <fullName>ENo</fullName>
        </recommendedName>
    </component>
    <component>
        <recommendedName>
            <fullName>ENp</fullName>
        </recommendedName>
    </component>
    <component>
        <recommendedName>
            <fullName>ENq</fullName>
        </recommendedName>
    </component>
    <component>
        <recommendedName>
            <fullName>ENr</fullName>
        </recommendedName>
    </component>
    <component>
        <recommendedName>
            <fullName>ENs</fullName>
        </recommendedName>
    </component>
    <component>
        <recommendedName>
            <fullName>ENt</fullName>
        </recommendedName>
    </component>
</protein>